<keyword id="KW-0002">3D-structure</keyword>
<keyword id="KW-0012">Acyltransferase</keyword>
<keyword id="KW-0028">Amino-acid biosynthesis</keyword>
<keyword id="KW-0963">Cytoplasm</keyword>
<keyword id="KW-0220">Diaminopimelate biosynthesis</keyword>
<keyword id="KW-0457">Lysine biosynthesis</keyword>
<keyword id="KW-0677">Repeat</keyword>
<keyword id="KW-0808">Transferase</keyword>
<dbReference type="EC" id="2.3.1.117" evidence="1"/>
<dbReference type="EMBL" id="AY684798">
    <property type="protein sequence ID" value="AAV80242.1"/>
    <property type="molecule type" value="Genomic_DNA"/>
</dbReference>
<dbReference type="RefSeq" id="WP_000080867.1">
    <property type="nucleotide sequence ID" value="NZ_WYAT01000009.1"/>
</dbReference>
<dbReference type="PDB" id="6AMY">
    <property type="method" value="X-ray"/>
    <property type="resolution" value="2.85 A"/>
    <property type="chains" value="A/B/C=1-273"/>
</dbReference>
<dbReference type="PDB" id="6AMZ">
    <property type="method" value="X-ray"/>
    <property type="resolution" value="2.05 A"/>
    <property type="chains" value="A=1-273"/>
</dbReference>
<dbReference type="PDBsum" id="6AMY"/>
<dbReference type="PDBsum" id="6AMZ"/>
<dbReference type="SMR" id="Q5DL43"/>
<dbReference type="STRING" id="400667.A1S_2539"/>
<dbReference type="GeneID" id="92894847"/>
<dbReference type="eggNOG" id="COG2171">
    <property type="taxonomic scope" value="Bacteria"/>
</dbReference>
<dbReference type="OMA" id="YFPIQKM"/>
<dbReference type="OrthoDB" id="9775362at2"/>
<dbReference type="UniPathway" id="UPA00034">
    <property type="reaction ID" value="UER00019"/>
</dbReference>
<dbReference type="GO" id="GO:0005737">
    <property type="term" value="C:cytoplasm"/>
    <property type="evidence" value="ECO:0007669"/>
    <property type="project" value="UniProtKB-SubCell"/>
</dbReference>
<dbReference type="GO" id="GO:0008666">
    <property type="term" value="F:2,3,4,5-tetrahydropyridine-2,6-dicarboxylate N-succinyltransferase activity"/>
    <property type="evidence" value="ECO:0007669"/>
    <property type="project" value="UniProtKB-UniRule"/>
</dbReference>
<dbReference type="GO" id="GO:0016779">
    <property type="term" value="F:nucleotidyltransferase activity"/>
    <property type="evidence" value="ECO:0007669"/>
    <property type="project" value="TreeGrafter"/>
</dbReference>
<dbReference type="GO" id="GO:0019877">
    <property type="term" value="P:diaminopimelate biosynthetic process"/>
    <property type="evidence" value="ECO:0007669"/>
    <property type="project" value="UniProtKB-UniRule"/>
</dbReference>
<dbReference type="GO" id="GO:0009089">
    <property type="term" value="P:lysine biosynthetic process via diaminopimelate"/>
    <property type="evidence" value="ECO:0007669"/>
    <property type="project" value="UniProtKB-UniRule"/>
</dbReference>
<dbReference type="CDD" id="cd03350">
    <property type="entry name" value="LbH_THP_succinylT"/>
    <property type="match status" value="1"/>
</dbReference>
<dbReference type="Gene3D" id="2.160.10.10">
    <property type="entry name" value="Hexapeptide repeat proteins"/>
    <property type="match status" value="1"/>
</dbReference>
<dbReference type="Gene3D" id="1.10.166.10">
    <property type="entry name" value="Tetrahydrodipicolinate-N-succinyltransferase, N-terminal domain"/>
    <property type="match status" value="1"/>
</dbReference>
<dbReference type="HAMAP" id="MF_00811">
    <property type="entry name" value="DapD"/>
    <property type="match status" value="1"/>
</dbReference>
<dbReference type="InterPro" id="IPR005664">
    <property type="entry name" value="DapD_Trfase_Hexpep_rpt_fam"/>
</dbReference>
<dbReference type="InterPro" id="IPR001451">
    <property type="entry name" value="Hexapep"/>
</dbReference>
<dbReference type="InterPro" id="IPR018357">
    <property type="entry name" value="Hexapep_transf_CS"/>
</dbReference>
<dbReference type="InterPro" id="IPR023180">
    <property type="entry name" value="THP_succinylTrfase_dom1"/>
</dbReference>
<dbReference type="InterPro" id="IPR037133">
    <property type="entry name" value="THP_succinylTrfase_N_sf"/>
</dbReference>
<dbReference type="InterPro" id="IPR011004">
    <property type="entry name" value="Trimer_LpxA-like_sf"/>
</dbReference>
<dbReference type="NCBIfam" id="TIGR00965">
    <property type="entry name" value="dapD"/>
    <property type="match status" value="1"/>
</dbReference>
<dbReference type="NCBIfam" id="NF008808">
    <property type="entry name" value="PRK11830.1"/>
    <property type="match status" value="1"/>
</dbReference>
<dbReference type="PANTHER" id="PTHR19136:SF52">
    <property type="entry name" value="2,3,4,5-TETRAHYDROPYRIDINE-2,6-DICARBOXYLATE N-SUCCINYLTRANSFERASE"/>
    <property type="match status" value="1"/>
</dbReference>
<dbReference type="PANTHER" id="PTHR19136">
    <property type="entry name" value="MOLYBDENUM COFACTOR GUANYLYLTRANSFERASE"/>
    <property type="match status" value="1"/>
</dbReference>
<dbReference type="Pfam" id="PF14602">
    <property type="entry name" value="Hexapep_2"/>
    <property type="match status" value="1"/>
</dbReference>
<dbReference type="Pfam" id="PF14805">
    <property type="entry name" value="THDPS_N_2"/>
    <property type="match status" value="1"/>
</dbReference>
<dbReference type="SUPFAM" id="SSF51161">
    <property type="entry name" value="Trimeric LpxA-like enzymes"/>
    <property type="match status" value="1"/>
</dbReference>
<dbReference type="PROSITE" id="PS00101">
    <property type="entry name" value="HEXAPEP_TRANSFERASES"/>
    <property type="match status" value="1"/>
</dbReference>
<name>DAPD_ACIBA</name>
<reference key="1">
    <citation type="journal article" date="2005" name="Antimicrob. Agents Chemother.">
        <title>Acquisition of resistance to carbapenems in multidrug-resistant clinical strains of Acinetobacter baumannii: natural insertional inactivation of a gene encoding a member of a novel family of beta-barrel outer membrane proteins.</title>
        <authorList>
            <person name="Mussi M.A."/>
            <person name="Limansky A.S."/>
            <person name="Viale A.M."/>
        </authorList>
    </citation>
    <scope>NUCLEOTIDE SEQUENCE [GENOMIC DNA]</scope>
    <source>
        <strain>Ab244</strain>
    </source>
</reference>
<gene>
    <name evidence="1" type="primary">dapD</name>
</gene>
<evidence type="ECO:0000255" key="1">
    <source>
        <dbReference type="HAMAP-Rule" id="MF_00811"/>
    </source>
</evidence>
<evidence type="ECO:0007829" key="2">
    <source>
        <dbReference type="PDB" id="6AMY"/>
    </source>
</evidence>
<evidence type="ECO:0007829" key="3">
    <source>
        <dbReference type="PDB" id="6AMZ"/>
    </source>
</evidence>
<feature type="chain" id="PRO_0000196909" description="2,3,4,5-tetrahydropyridine-2,6-dicarboxylate N-succinyltransferase">
    <location>
        <begin position="1"/>
        <end position="273"/>
    </location>
</feature>
<feature type="binding site" evidence="1">
    <location>
        <position position="104"/>
    </location>
    <ligand>
        <name>substrate</name>
    </ligand>
</feature>
<feature type="binding site" evidence="1">
    <location>
        <position position="141"/>
    </location>
    <ligand>
        <name>substrate</name>
    </ligand>
</feature>
<feature type="helix" evidence="3">
    <location>
        <begin position="4"/>
        <end position="13"/>
    </location>
</feature>
<feature type="helix" evidence="3">
    <location>
        <begin position="15"/>
        <end position="17"/>
    </location>
</feature>
<feature type="strand" evidence="3">
    <location>
        <begin position="20"/>
        <end position="22"/>
    </location>
</feature>
<feature type="helix" evidence="3">
    <location>
        <begin position="25"/>
        <end position="39"/>
    </location>
</feature>
<feature type="strand" evidence="3">
    <location>
        <begin position="45"/>
        <end position="49"/>
    </location>
</feature>
<feature type="strand" evidence="3">
    <location>
        <begin position="52"/>
        <end position="55"/>
    </location>
</feature>
<feature type="helix" evidence="3">
    <location>
        <begin position="57"/>
        <end position="68"/>
    </location>
</feature>
<feature type="strand" evidence="2">
    <location>
        <begin position="73"/>
        <end position="76"/>
    </location>
</feature>
<feature type="helix" evidence="3">
    <location>
        <begin position="77"/>
        <end position="79"/>
    </location>
</feature>
<feature type="strand" evidence="2">
    <location>
        <begin position="81"/>
        <end position="86"/>
    </location>
</feature>
<feature type="turn" evidence="3">
    <location>
        <begin position="89"/>
        <end position="92"/>
    </location>
</feature>
<feature type="helix" evidence="3">
    <location>
        <begin position="95"/>
        <end position="101"/>
    </location>
</feature>
<feature type="strand" evidence="3">
    <location>
        <begin position="110"/>
        <end position="112"/>
    </location>
</feature>
<feature type="strand" evidence="3">
    <location>
        <begin position="125"/>
        <end position="128"/>
    </location>
</feature>
<feature type="strand" evidence="3">
    <location>
        <begin position="144"/>
        <end position="146"/>
    </location>
</feature>
<feature type="strand" evidence="3">
    <location>
        <begin position="214"/>
        <end position="216"/>
    </location>
</feature>
<feature type="turn" evidence="3">
    <location>
        <begin position="217"/>
        <end position="219"/>
    </location>
</feature>
<feature type="strand" evidence="3">
    <location>
        <begin position="225"/>
        <end position="227"/>
    </location>
</feature>
<feature type="strand" evidence="3">
    <location>
        <begin position="231"/>
        <end position="239"/>
    </location>
</feature>
<feature type="strand" evidence="2">
    <location>
        <begin position="241"/>
        <end position="244"/>
    </location>
</feature>
<feature type="strand" evidence="3">
    <location>
        <begin position="246"/>
        <end position="255"/>
    </location>
</feature>
<feature type="helix" evidence="2">
    <location>
        <begin position="266"/>
        <end position="269"/>
    </location>
</feature>
<sequence length="273" mass="29552">MSQLSTIIEQAFEDRANFTAADCPSEIRQAVEEAIAGLDNGTLRVAEKINGEWVVHQWLKKAVLLSFKLNDNKPIESCDLRFYDKVETKFSGWTEEQFKAAGVRVVPPAVARRGSFQAKNVVLMPSYVNIGAYVDEGTMVDTWATVGSCAQIGKNVHLSGGVGIGGVLEPLQANPTIIEDNCFIGARSEIVEGVIVEEGSVISMGVYIGQSTRIYDRETGEIHYGRVPAGSVVVPGNLPSADGKYSLYAAIIVKKVDAQTRAKTSLNDLLRAD</sequence>
<accession>Q5DL43</accession>
<protein>
    <recommendedName>
        <fullName evidence="1">2,3,4,5-tetrahydropyridine-2,6-dicarboxylate N-succinyltransferase</fullName>
        <ecNumber evidence="1">2.3.1.117</ecNumber>
    </recommendedName>
    <alternativeName>
        <fullName evidence="1">Tetrahydrodipicolinate N-succinyltransferase</fullName>
        <shortName evidence="1">THDP succinyltransferase</shortName>
        <shortName evidence="1">THP succinyltransferase</shortName>
        <shortName evidence="1">Tetrahydropicolinate succinylase</shortName>
    </alternativeName>
</protein>
<organism>
    <name type="scientific">Acinetobacter baumannii</name>
    <dbReference type="NCBI Taxonomy" id="470"/>
    <lineage>
        <taxon>Bacteria</taxon>
        <taxon>Pseudomonadati</taxon>
        <taxon>Pseudomonadota</taxon>
        <taxon>Gammaproteobacteria</taxon>
        <taxon>Moraxellales</taxon>
        <taxon>Moraxellaceae</taxon>
        <taxon>Acinetobacter</taxon>
        <taxon>Acinetobacter calcoaceticus/baumannii complex</taxon>
    </lineage>
</organism>
<comment type="catalytic activity">
    <reaction evidence="1">
        <text>(S)-2,3,4,5-tetrahydrodipicolinate + succinyl-CoA + H2O = (S)-2-succinylamino-6-oxoheptanedioate + CoA</text>
        <dbReference type="Rhea" id="RHEA:17325"/>
        <dbReference type="ChEBI" id="CHEBI:15377"/>
        <dbReference type="ChEBI" id="CHEBI:15685"/>
        <dbReference type="ChEBI" id="CHEBI:16845"/>
        <dbReference type="ChEBI" id="CHEBI:57287"/>
        <dbReference type="ChEBI" id="CHEBI:57292"/>
        <dbReference type="EC" id="2.3.1.117"/>
    </reaction>
</comment>
<comment type="pathway">
    <text evidence="1">Amino-acid biosynthesis; L-lysine biosynthesis via DAP pathway; LL-2,6-diaminopimelate from (S)-tetrahydrodipicolinate (succinylase route): step 1/3.</text>
</comment>
<comment type="subunit">
    <text evidence="1">Homotrimer.</text>
</comment>
<comment type="subcellular location">
    <subcellularLocation>
        <location evidence="1">Cytoplasm</location>
    </subcellularLocation>
</comment>
<comment type="similarity">
    <text evidence="1">Belongs to the transferase hexapeptide repeat family.</text>
</comment>
<proteinExistence type="evidence at protein level"/>